<accession>A3N2W7</accession>
<proteinExistence type="inferred from homology"/>
<comment type="function">
    <text evidence="1">Catalyzes the interconversion of beta-pyran and beta-furan forms of D-ribose.</text>
</comment>
<comment type="catalytic activity">
    <reaction evidence="1">
        <text>beta-D-ribopyranose = beta-D-ribofuranose</text>
        <dbReference type="Rhea" id="RHEA:25432"/>
        <dbReference type="ChEBI" id="CHEBI:27476"/>
        <dbReference type="ChEBI" id="CHEBI:47002"/>
        <dbReference type="EC" id="5.4.99.62"/>
    </reaction>
</comment>
<comment type="pathway">
    <text evidence="1">Carbohydrate metabolism; D-ribose degradation; D-ribose 5-phosphate from beta-D-ribopyranose: step 1/2.</text>
</comment>
<comment type="subunit">
    <text evidence="1">Homodecamer.</text>
</comment>
<comment type="subcellular location">
    <subcellularLocation>
        <location evidence="1">Cytoplasm</location>
    </subcellularLocation>
</comment>
<comment type="similarity">
    <text evidence="1">Belongs to the RbsD / FucU family. RbsD subfamily.</text>
</comment>
<dbReference type="EC" id="5.4.99.62" evidence="1"/>
<dbReference type="EMBL" id="CP000569">
    <property type="protein sequence ID" value="ABN74753.1"/>
    <property type="molecule type" value="Genomic_DNA"/>
</dbReference>
<dbReference type="RefSeq" id="WP_005602428.1">
    <property type="nucleotide sequence ID" value="NC_009053.1"/>
</dbReference>
<dbReference type="SMR" id="A3N2W7"/>
<dbReference type="STRING" id="416269.APL_1669"/>
<dbReference type="EnsemblBacteria" id="ABN74753">
    <property type="protein sequence ID" value="ABN74753"/>
    <property type="gene ID" value="APL_1669"/>
</dbReference>
<dbReference type="KEGG" id="apl:APL_1669"/>
<dbReference type="eggNOG" id="COG1869">
    <property type="taxonomic scope" value="Bacteria"/>
</dbReference>
<dbReference type="HOGENOM" id="CLU_135498_0_0_6"/>
<dbReference type="UniPathway" id="UPA00916">
    <property type="reaction ID" value="UER00888"/>
</dbReference>
<dbReference type="Proteomes" id="UP000001432">
    <property type="component" value="Chromosome"/>
</dbReference>
<dbReference type="GO" id="GO:0005829">
    <property type="term" value="C:cytosol"/>
    <property type="evidence" value="ECO:0007669"/>
    <property type="project" value="TreeGrafter"/>
</dbReference>
<dbReference type="GO" id="GO:0062193">
    <property type="term" value="F:D-ribose pyranase activity"/>
    <property type="evidence" value="ECO:0007669"/>
    <property type="project" value="UniProtKB-EC"/>
</dbReference>
<dbReference type="GO" id="GO:0016872">
    <property type="term" value="F:intramolecular lyase activity"/>
    <property type="evidence" value="ECO:0007669"/>
    <property type="project" value="UniProtKB-UniRule"/>
</dbReference>
<dbReference type="GO" id="GO:0048029">
    <property type="term" value="F:monosaccharide binding"/>
    <property type="evidence" value="ECO:0007669"/>
    <property type="project" value="InterPro"/>
</dbReference>
<dbReference type="GO" id="GO:0019303">
    <property type="term" value="P:D-ribose catabolic process"/>
    <property type="evidence" value="ECO:0007669"/>
    <property type="project" value="UniProtKB-UniRule"/>
</dbReference>
<dbReference type="Gene3D" id="3.40.1650.10">
    <property type="entry name" value="RbsD-like domain"/>
    <property type="match status" value="1"/>
</dbReference>
<dbReference type="HAMAP" id="MF_01661">
    <property type="entry name" value="D_rib_pyranase"/>
    <property type="match status" value="1"/>
</dbReference>
<dbReference type="InterPro" id="IPR023064">
    <property type="entry name" value="D-ribose_pyranase"/>
</dbReference>
<dbReference type="InterPro" id="IPR023750">
    <property type="entry name" value="RbsD-like_sf"/>
</dbReference>
<dbReference type="InterPro" id="IPR007721">
    <property type="entry name" value="RbsD_FucU"/>
</dbReference>
<dbReference type="NCBIfam" id="NF008761">
    <property type="entry name" value="PRK11797.1"/>
    <property type="match status" value="1"/>
</dbReference>
<dbReference type="PANTHER" id="PTHR37831">
    <property type="entry name" value="D-RIBOSE PYRANASE"/>
    <property type="match status" value="1"/>
</dbReference>
<dbReference type="PANTHER" id="PTHR37831:SF1">
    <property type="entry name" value="D-RIBOSE PYRANASE"/>
    <property type="match status" value="1"/>
</dbReference>
<dbReference type="Pfam" id="PF05025">
    <property type="entry name" value="RbsD_FucU"/>
    <property type="match status" value="1"/>
</dbReference>
<dbReference type="SUPFAM" id="SSF102546">
    <property type="entry name" value="RbsD-like"/>
    <property type="match status" value="1"/>
</dbReference>
<name>RBSD_ACTP2</name>
<organism>
    <name type="scientific">Actinobacillus pleuropneumoniae serotype 5b (strain L20)</name>
    <dbReference type="NCBI Taxonomy" id="416269"/>
    <lineage>
        <taxon>Bacteria</taxon>
        <taxon>Pseudomonadati</taxon>
        <taxon>Pseudomonadota</taxon>
        <taxon>Gammaproteobacteria</taxon>
        <taxon>Pasteurellales</taxon>
        <taxon>Pasteurellaceae</taxon>
        <taxon>Actinobacillus</taxon>
    </lineage>
</organism>
<gene>
    <name evidence="1" type="primary">rbsD</name>
    <name type="ordered locus">APL_1669</name>
</gene>
<reference key="1">
    <citation type="journal article" date="2008" name="J. Bacteriol.">
        <title>The complete genome sequence of Actinobacillus pleuropneumoniae L20 (serotype 5b).</title>
        <authorList>
            <person name="Foote S.J."/>
            <person name="Bosse J.T."/>
            <person name="Bouevitch A.B."/>
            <person name="Langford P.R."/>
            <person name="Young N.M."/>
            <person name="Nash J.H.E."/>
        </authorList>
    </citation>
    <scope>NUCLEOTIDE SEQUENCE [LARGE SCALE GENOMIC DNA]</scope>
    <source>
        <strain>L20</strain>
    </source>
</reference>
<sequence>MKKTAVLNAQLSGVIASLGHTDGLTICDAGLPIPSEQQCVDLALTKGVPSFLSTLEVVLTELFVERILLAEEIKQANPTIEQQLLEMINKLAQTQGRQIEIEYVVHSEFKQRSNQAKAVVRTGECSPYANVILYSGVPF</sequence>
<protein>
    <recommendedName>
        <fullName evidence="1">D-ribose pyranase</fullName>
        <ecNumber evidence="1">5.4.99.62</ecNumber>
    </recommendedName>
</protein>
<keyword id="KW-0119">Carbohydrate metabolism</keyword>
<keyword id="KW-0963">Cytoplasm</keyword>
<keyword id="KW-0413">Isomerase</keyword>
<keyword id="KW-1185">Reference proteome</keyword>
<feature type="chain" id="PRO_0000346165" description="D-ribose pyranase">
    <location>
        <begin position="1"/>
        <end position="139"/>
    </location>
</feature>
<feature type="active site" description="Proton donor" evidence="1">
    <location>
        <position position="20"/>
    </location>
</feature>
<feature type="binding site" evidence="1">
    <location>
        <position position="28"/>
    </location>
    <ligand>
        <name>substrate</name>
    </ligand>
</feature>
<feature type="binding site" evidence="1">
    <location>
        <position position="106"/>
    </location>
    <ligand>
        <name>substrate</name>
    </ligand>
</feature>
<feature type="binding site" evidence="1">
    <location>
        <begin position="128"/>
        <end position="130"/>
    </location>
    <ligand>
        <name>substrate</name>
    </ligand>
</feature>
<evidence type="ECO:0000255" key="1">
    <source>
        <dbReference type="HAMAP-Rule" id="MF_01661"/>
    </source>
</evidence>